<dbReference type="EC" id="2.4.2.29" evidence="1"/>
<dbReference type="EMBL" id="AE014074">
    <property type="protein sequence ID" value="AAM78756.1"/>
    <property type="molecule type" value="Genomic_DNA"/>
</dbReference>
<dbReference type="RefSeq" id="WP_002986319.1">
    <property type="nucleotide sequence ID" value="NC_004070.1"/>
</dbReference>
<dbReference type="SMR" id="P0DF86"/>
<dbReference type="GeneID" id="69900150"/>
<dbReference type="KEGG" id="spg:SpyM3_0149"/>
<dbReference type="HOGENOM" id="CLU_022060_0_1_9"/>
<dbReference type="UniPathway" id="UPA00392"/>
<dbReference type="Proteomes" id="UP000000564">
    <property type="component" value="Chromosome"/>
</dbReference>
<dbReference type="GO" id="GO:0005829">
    <property type="term" value="C:cytosol"/>
    <property type="evidence" value="ECO:0007669"/>
    <property type="project" value="TreeGrafter"/>
</dbReference>
<dbReference type="GO" id="GO:0046872">
    <property type="term" value="F:metal ion binding"/>
    <property type="evidence" value="ECO:0007669"/>
    <property type="project" value="UniProtKB-KW"/>
</dbReference>
<dbReference type="GO" id="GO:0008479">
    <property type="term" value="F:tRNA-guanosine(34) queuine transglycosylase activity"/>
    <property type="evidence" value="ECO:0007669"/>
    <property type="project" value="UniProtKB-UniRule"/>
</dbReference>
<dbReference type="GO" id="GO:0008616">
    <property type="term" value="P:queuosine biosynthetic process"/>
    <property type="evidence" value="ECO:0007669"/>
    <property type="project" value="UniProtKB-UniRule"/>
</dbReference>
<dbReference type="GO" id="GO:0002099">
    <property type="term" value="P:tRNA wobble guanine modification"/>
    <property type="evidence" value="ECO:0007669"/>
    <property type="project" value="TreeGrafter"/>
</dbReference>
<dbReference type="GO" id="GO:0101030">
    <property type="term" value="P:tRNA-guanine transglycosylation"/>
    <property type="evidence" value="ECO:0007669"/>
    <property type="project" value="InterPro"/>
</dbReference>
<dbReference type="FunFam" id="3.20.20.105:FF:000001">
    <property type="entry name" value="Queuine tRNA-ribosyltransferase"/>
    <property type="match status" value="1"/>
</dbReference>
<dbReference type="Gene3D" id="3.20.20.105">
    <property type="entry name" value="Queuine tRNA-ribosyltransferase-like"/>
    <property type="match status" value="1"/>
</dbReference>
<dbReference type="HAMAP" id="MF_00168">
    <property type="entry name" value="Q_tRNA_Tgt"/>
    <property type="match status" value="1"/>
</dbReference>
<dbReference type="InterPro" id="IPR050076">
    <property type="entry name" value="ArchSynthase1/Queuine_TRR"/>
</dbReference>
<dbReference type="InterPro" id="IPR004803">
    <property type="entry name" value="TGT"/>
</dbReference>
<dbReference type="InterPro" id="IPR036511">
    <property type="entry name" value="TGT-like_sf"/>
</dbReference>
<dbReference type="InterPro" id="IPR002616">
    <property type="entry name" value="tRNA_ribo_trans-like"/>
</dbReference>
<dbReference type="NCBIfam" id="TIGR00430">
    <property type="entry name" value="Q_tRNA_tgt"/>
    <property type="match status" value="1"/>
</dbReference>
<dbReference type="NCBIfam" id="TIGR00449">
    <property type="entry name" value="tgt_general"/>
    <property type="match status" value="1"/>
</dbReference>
<dbReference type="PANTHER" id="PTHR46499">
    <property type="entry name" value="QUEUINE TRNA-RIBOSYLTRANSFERASE"/>
    <property type="match status" value="1"/>
</dbReference>
<dbReference type="PANTHER" id="PTHR46499:SF1">
    <property type="entry name" value="QUEUINE TRNA-RIBOSYLTRANSFERASE"/>
    <property type="match status" value="1"/>
</dbReference>
<dbReference type="Pfam" id="PF01702">
    <property type="entry name" value="TGT"/>
    <property type="match status" value="1"/>
</dbReference>
<dbReference type="SUPFAM" id="SSF51713">
    <property type="entry name" value="tRNA-guanine transglycosylase"/>
    <property type="match status" value="1"/>
</dbReference>
<organism>
    <name type="scientific">Streptococcus pyogenes serotype M3 (strain ATCC BAA-595 / MGAS315)</name>
    <dbReference type="NCBI Taxonomy" id="198466"/>
    <lineage>
        <taxon>Bacteria</taxon>
        <taxon>Bacillati</taxon>
        <taxon>Bacillota</taxon>
        <taxon>Bacilli</taxon>
        <taxon>Lactobacillales</taxon>
        <taxon>Streptococcaceae</taxon>
        <taxon>Streptococcus</taxon>
    </lineage>
</organism>
<feature type="chain" id="PRO_0000135536" description="Queuine tRNA-ribosyltransferase">
    <location>
        <begin position="1"/>
        <end position="380"/>
    </location>
</feature>
<feature type="region of interest" description="RNA binding" evidence="1">
    <location>
        <begin position="251"/>
        <end position="257"/>
    </location>
</feature>
<feature type="region of interest" description="RNA binding; important for wobble base 34 recognition" evidence="1">
    <location>
        <begin position="275"/>
        <end position="279"/>
    </location>
</feature>
<feature type="active site" description="Proton acceptor" evidence="1">
    <location>
        <position position="96"/>
    </location>
</feature>
<feature type="active site" description="Nucleophile" evidence="1">
    <location>
        <position position="270"/>
    </location>
</feature>
<feature type="binding site" evidence="1">
    <location>
        <begin position="96"/>
        <end position="100"/>
    </location>
    <ligand>
        <name>substrate</name>
    </ligand>
</feature>
<feature type="binding site" evidence="1">
    <location>
        <position position="150"/>
    </location>
    <ligand>
        <name>substrate</name>
    </ligand>
</feature>
<feature type="binding site" evidence="1">
    <location>
        <position position="193"/>
    </location>
    <ligand>
        <name>substrate</name>
    </ligand>
</feature>
<feature type="binding site" evidence="1">
    <location>
        <position position="220"/>
    </location>
    <ligand>
        <name>substrate</name>
    </ligand>
</feature>
<feature type="binding site" evidence="1">
    <location>
        <position position="308"/>
    </location>
    <ligand>
        <name>Zn(2+)</name>
        <dbReference type="ChEBI" id="CHEBI:29105"/>
    </ligand>
</feature>
<feature type="binding site" evidence="1">
    <location>
        <position position="310"/>
    </location>
    <ligand>
        <name>Zn(2+)</name>
        <dbReference type="ChEBI" id="CHEBI:29105"/>
    </ligand>
</feature>
<feature type="binding site" evidence="1">
    <location>
        <position position="313"/>
    </location>
    <ligand>
        <name>Zn(2+)</name>
        <dbReference type="ChEBI" id="CHEBI:29105"/>
    </ligand>
</feature>
<feature type="binding site" evidence="1">
    <location>
        <position position="339"/>
    </location>
    <ligand>
        <name>Zn(2+)</name>
        <dbReference type="ChEBI" id="CHEBI:29105"/>
    </ligand>
</feature>
<evidence type="ECO:0000255" key="1">
    <source>
        <dbReference type="HAMAP-Rule" id="MF_00168"/>
    </source>
</evidence>
<keyword id="KW-0328">Glycosyltransferase</keyword>
<keyword id="KW-0479">Metal-binding</keyword>
<keyword id="KW-0671">Queuosine biosynthesis</keyword>
<keyword id="KW-0808">Transferase</keyword>
<keyword id="KW-0819">tRNA processing</keyword>
<keyword id="KW-0862">Zinc</keyword>
<proteinExistence type="inferred from homology"/>
<gene>
    <name evidence="1" type="primary">tgt</name>
    <name type="ordered locus">SpyM3_0149</name>
</gene>
<accession>P0DF86</accession>
<accession>P66909</accession>
<accession>Q8P2S1</accession>
<reference key="1">
    <citation type="journal article" date="2002" name="Proc. Natl. Acad. Sci. U.S.A.">
        <title>Genome sequence of a serotype M3 strain of group A Streptococcus: phage-encoded toxins, the high-virulence phenotype, and clone emergence.</title>
        <authorList>
            <person name="Beres S.B."/>
            <person name="Sylva G.L."/>
            <person name="Barbian K.D."/>
            <person name="Lei B."/>
            <person name="Hoff J.S."/>
            <person name="Mammarella N.D."/>
            <person name="Liu M.-Y."/>
            <person name="Smoot J.C."/>
            <person name="Porcella S.F."/>
            <person name="Parkins L.D."/>
            <person name="Campbell D.S."/>
            <person name="Smith T.M."/>
            <person name="McCormick J.K."/>
            <person name="Leung D.Y.M."/>
            <person name="Schlievert P.M."/>
            <person name="Musser J.M."/>
        </authorList>
    </citation>
    <scope>NUCLEOTIDE SEQUENCE [LARGE SCALE GENOMIC DNA]</scope>
    <source>
        <strain>ATCC BAA-595 / MGAS315</strain>
    </source>
</reference>
<sequence>MTDYPIKYRLIKTEKHTGARLGEIITPHGTFPTPMFMPVGTQATVKTQSPEELKAIGSGIILSNTYHLWLRPGDELIARSGGLHKFMNWDQPILTDSGGFQVYSLADSRNITEEGVTFKNHLNGSKMFLSPEKAISIQNNLGSDIMMSFDECPQFYQPYDYVKKSIERTSRWAERGLKAHRRPHDQGLFGIVQGAGFEDLRRQSAADLVAMDFPGYSIGGLAVGESHEEMNAVLDFTTPLLPENKPRYLMGVGAPDSLIDGVIRGVDMFDCVLPTRIARNGTCMTSEGRLVIKNAKFAEDFTPLDHDCDCYTCQNYSRAYIRHLLKADETFGIRLTSYHNLYFLVNLMKKVRQAIMDDNLLEFRQDFLERYGYNKSNRNF</sequence>
<name>TGT_STRP3</name>
<protein>
    <recommendedName>
        <fullName evidence="1">Queuine tRNA-ribosyltransferase</fullName>
        <ecNumber evidence="1">2.4.2.29</ecNumber>
    </recommendedName>
    <alternativeName>
        <fullName evidence="1">Guanine insertion enzyme</fullName>
    </alternativeName>
    <alternativeName>
        <fullName evidence="1">tRNA-guanine transglycosylase</fullName>
    </alternativeName>
</protein>
<comment type="function">
    <text evidence="1">Catalyzes the base-exchange of a guanine (G) residue with the queuine precursor 7-aminomethyl-7-deazaguanine (PreQ1) at position 34 (anticodon wobble position) in tRNAs with GU(N) anticodons (tRNA-Asp, -Asn, -His and -Tyr). Catalysis occurs through a double-displacement mechanism. The nucleophile active site attacks the C1' of nucleotide 34 to detach the guanine base from the RNA, forming a covalent enzyme-RNA intermediate. The proton acceptor active site deprotonates the incoming PreQ1, allowing a nucleophilic attack on the C1' of the ribose to form the product. After dissociation, two additional enzymatic reactions on the tRNA convert PreQ1 to queuine (Q), resulting in the hypermodified nucleoside queuosine (7-(((4,5-cis-dihydroxy-2-cyclopenten-1-yl)amino)methyl)-7-deazaguanosine).</text>
</comment>
<comment type="catalytic activity">
    <reaction evidence="1">
        <text>7-aminomethyl-7-carbaguanine + guanosine(34) in tRNA = 7-aminomethyl-7-carbaguanosine(34) in tRNA + guanine</text>
        <dbReference type="Rhea" id="RHEA:24104"/>
        <dbReference type="Rhea" id="RHEA-COMP:10341"/>
        <dbReference type="Rhea" id="RHEA-COMP:10342"/>
        <dbReference type="ChEBI" id="CHEBI:16235"/>
        <dbReference type="ChEBI" id="CHEBI:58703"/>
        <dbReference type="ChEBI" id="CHEBI:74269"/>
        <dbReference type="ChEBI" id="CHEBI:82833"/>
        <dbReference type="EC" id="2.4.2.29"/>
    </reaction>
</comment>
<comment type="cofactor">
    <cofactor evidence="1">
        <name>Zn(2+)</name>
        <dbReference type="ChEBI" id="CHEBI:29105"/>
    </cofactor>
    <text evidence="1">Binds 1 zinc ion per subunit.</text>
</comment>
<comment type="pathway">
    <text evidence="1">tRNA modification; tRNA-queuosine biosynthesis.</text>
</comment>
<comment type="subunit">
    <text evidence="1">Homodimer. Within each dimer, one monomer is responsible for RNA recognition and catalysis, while the other monomer binds to the replacement base PreQ1.</text>
</comment>
<comment type="similarity">
    <text evidence="1">Belongs to the queuine tRNA-ribosyltransferase family.</text>
</comment>